<dbReference type="EMBL" id="AC002409">
    <property type="protein sequence ID" value="AAB86452.1"/>
    <property type="molecule type" value="Genomic_DNA"/>
</dbReference>
<dbReference type="EMBL" id="CP002685">
    <property type="protein sequence ID" value="AEC09897.1"/>
    <property type="molecule type" value="Genomic_DNA"/>
</dbReference>
<dbReference type="EMBL" id="BT012563">
    <property type="protein sequence ID" value="AAS99707.1"/>
    <property type="molecule type" value="mRNA"/>
</dbReference>
<dbReference type="EMBL" id="AK230399">
    <property type="protein sequence ID" value="BAF02197.1"/>
    <property type="molecule type" value="mRNA"/>
</dbReference>
<dbReference type="PIR" id="T00756">
    <property type="entry name" value="T00756"/>
</dbReference>
<dbReference type="RefSeq" id="NP_181624.1">
    <molecule id="Q2V414-1"/>
    <property type="nucleotide sequence ID" value="NM_129655.4"/>
</dbReference>
<dbReference type="FunCoup" id="Q2V414">
    <property type="interactions" value="18"/>
</dbReference>
<dbReference type="PaxDb" id="3702-AT2G40920.1"/>
<dbReference type="ProteomicsDB" id="230700">
    <molecule id="Q2V414-1"/>
</dbReference>
<dbReference type="EnsemblPlants" id="AT2G40920.1">
    <molecule id="Q2V414-1"/>
    <property type="protein sequence ID" value="AT2G40920.1"/>
    <property type="gene ID" value="AT2G40920"/>
</dbReference>
<dbReference type="GeneID" id="818689"/>
<dbReference type="Gramene" id="AT2G40920.1">
    <molecule id="Q2V414-1"/>
    <property type="protein sequence ID" value="AT2G40920.1"/>
    <property type="gene ID" value="AT2G40920"/>
</dbReference>
<dbReference type="KEGG" id="ath:AT2G40920"/>
<dbReference type="Araport" id="AT2G40920"/>
<dbReference type="TAIR" id="AT2G40920"/>
<dbReference type="eggNOG" id="ENOG502SPBF">
    <property type="taxonomic scope" value="Eukaryota"/>
</dbReference>
<dbReference type="InParanoid" id="Q2V414"/>
<dbReference type="OMA" id="CQNIAKI"/>
<dbReference type="PhylomeDB" id="Q2V414"/>
<dbReference type="PRO" id="PR:Q2V414"/>
<dbReference type="Proteomes" id="UP000006548">
    <property type="component" value="Chromosome 2"/>
</dbReference>
<dbReference type="ExpressionAtlas" id="Q2V414">
    <property type="expression patterns" value="baseline and differential"/>
</dbReference>
<dbReference type="CDD" id="cd22157">
    <property type="entry name" value="F-box_AtFBW1-like"/>
    <property type="match status" value="1"/>
</dbReference>
<dbReference type="InterPro" id="IPR013187">
    <property type="entry name" value="F-box-assoc_dom_typ3"/>
</dbReference>
<dbReference type="InterPro" id="IPR017451">
    <property type="entry name" value="F-box-assoc_interact_dom"/>
</dbReference>
<dbReference type="InterPro" id="IPR036047">
    <property type="entry name" value="F-box-like_dom_sf"/>
</dbReference>
<dbReference type="InterPro" id="IPR001810">
    <property type="entry name" value="F-box_dom"/>
</dbReference>
<dbReference type="NCBIfam" id="TIGR01640">
    <property type="entry name" value="F_box_assoc_1"/>
    <property type="match status" value="1"/>
</dbReference>
<dbReference type="PANTHER" id="PTHR31111:SF15">
    <property type="entry name" value="(RAPE) HYPOTHETICAL PROTEIN"/>
    <property type="match status" value="1"/>
</dbReference>
<dbReference type="PANTHER" id="PTHR31111">
    <property type="entry name" value="BNAA05G37150D PROTEIN-RELATED"/>
    <property type="match status" value="1"/>
</dbReference>
<dbReference type="Pfam" id="PF00646">
    <property type="entry name" value="F-box"/>
    <property type="match status" value="1"/>
</dbReference>
<dbReference type="Pfam" id="PF08268">
    <property type="entry name" value="FBA_3"/>
    <property type="match status" value="1"/>
</dbReference>
<dbReference type="SMART" id="SM00256">
    <property type="entry name" value="FBOX"/>
    <property type="match status" value="1"/>
</dbReference>
<dbReference type="SUPFAM" id="SSF81383">
    <property type="entry name" value="F-box domain"/>
    <property type="match status" value="1"/>
</dbReference>
<comment type="alternative products">
    <event type="alternative splicing"/>
    <isoform>
        <id>Q2V414-1</id>
        <name>1</name>
        <sequence type="displayed"/>
    </isoform>
    <isoform>
        <id>Q2V414-2</id>
        <name>2</name>
        <sequence type="described" ref="VSP_024104"/>
    </isoform>
</comment>
<organism>
    <name type="scientific">Arabidopsis thaliana</name>
    <name type="common">Mouse-ear cress</name>
    <dbReference type="NCBI Taxonomy" id="3702"/>
    <lineage>
        <taxon>Eukaryota</taxon>
        <taxon>Viridiplantae</taxon>
        <taxon>Streptophyta</taxon>
        <taxon>Embryophyta</taxon>
        <taxon>Tracheophyta</taxon>
        <taxon>Spermatophyta</taxon>
        <taxon>Magnoliopsida</taxon>
        <taxon>eudicotyledons</taxon>
        <taxon>Gunneridae</taxon>
        <taxon>Pentapetalae</taxon>
        <taxon>rosids</taxon>
        <taxon>malvids</taxon>
        <taxon>Brassicales</taxon>
        <taxon>Brassicaceae</taxon>
        <taxon>Camelineae</taxon>
        <taxon>Arabidopsis</taxon>
    </lineage>
</organism>
<feature type="chain" id="PRO_0000281938" description="F-box/LRR-repeat protein At2g40920">
    <location>
        <begin position="1"/>
        <end position="436"/>
    </location>
</feature>
<feature type="domain" description="F-box">
    <location>
        <begin position="48"/>
        <end position="98"/>
    </location>
</feature>
<feature type="repeat" description="LRR 1">
    <location>
        <begin position="276"/>
        <end position="301"/>
    </location>
</feature>
<feature type="repeat" description="LRR 2">
    <location>
        <begin position="393"/>
        <end position="416"/>
    </location>
</feature>
<feature type="splice variant" id="VSP_024104" description="In isoform 2." evidence="1">
    <location>
        <begin position="60"/>
        <end position="436"/>
    </location>
</feature>
<protein>
    <recommendedName>
        <fullName>F-box/LRR-repeat protein At2g40920</fullName>
    </recommendedName>
</protein>
<keyword id="KW-0025">Alternative splicing</keyword>
<keyword id="KW-0433">Leucine-rich repeat</keyword>
<keyword id="KW-1185">Reference proteome</keyword>
<keyword id="KW-0677">Repeat</keyword>
<gene>
    <name type="ordered locus">At2g40920</name>
    <name type="ORF">T20B5.12</name>
</gene>
<name>FBL37_ARATH</name>
<reference key="1">
    <citation type="journal article" date="1999" name="Nature">
        <title>Sequence and analysis of chromosome 2 of the plant Arabidopsis thaliana.</title>
        <authorList>
            <person name="Lin X."/>
            <person name="Kaul S."/>
            <person name="Rounsley S.D."/>
            <person name="Shea T.P."/>
            <person name="Benito M.-I."/>
            <person name="Town C.D."/>
            <person name="Fujii C.Y."/>
            <person name="Mason T.M."/>
            <person name="Bowman C.L."/>
            <person name="Barnstead M.E."/>
            <person name="Feldblyum T.V."/>
            <person name="Buell C.R."/>
            <person name="Ketchum K.A."/>
            <person name="Lee J.J."/>
            <person name="Ronning C.M."/>
            <person name="Koo H.L."/>
            <person name="Moffat K.S."/>
            <person name="Cronin L.A."/>
            <person name="Shen M."/>
            <person name="Pai G."/>
            <person name="Van Aken S."/>
            <person name="Umayam L."/>
            <person name="Tallon L.J."/>
            <person name="Gill J.E."/>
            <person name="Adams M.D."/>
            <person name="Carrera A.J."/>
            <person name="Creasy T.H."/>
            <person name="Goodman H.M."/>
            <person name="Somerville C.R."/>
            <person name="Copenhaver G.P."/>
            <person name="Preuss D."/>
            <person name="Nierman W.C."/>
            <person name="White O."/>
            <person name="Eisen J.A."/>
            <person name="Salzberg S.L."/>
            <person name="Fraser C.M."/>
            <person name="Venter J.C."/>
        </authorList>
    </citation>
    <scope>NUCLEOTIDE SEQUENCE [LARGE SCALE GENOMIC DNA]</scope>
    <source>
        <strain>cv. Columbia</strain>
    </source>
</reference>
<reference key="2">
    <citation type="journal article" date="2017" name="Plant J.">
        <title>Araport11: a complete reannotation of the Arabidopsis thaliana reference genome.</title>
        <authorList>
            <person name="Cheng C.Y."/>
            <person name="Krishnakumar V."/>
            <person name="Chan A.P."/>
            <person name="Thibaud-Nissen F."/>
            <person name="Schobel S."/>
            <person name="Town C.D."/>
        </authorList>
    </citation>
    <scope>GENOME REANNOTATION</scope>
    <source>
        <strain>cv. Columbia</strain>
    </source>
</reference>
<reference key="3">
    <citation type="submission" date="2004-04" db="EMBL/GenBank/DDBJ databases">
        <title>Arabidopsis ORF clones.</title>
        <authorList>
            <person name="Kim C.J."/>
            <person name="Chen H."/>
            <person name="Cheuk R.F."/>
            <person name="Shinn P."/>
            <person name="Carninci P."/>
            <person name="Hayashizaki Y."/>
            <person name="Ishida J."/>
            <person name="Kamiya A."/>
            <person name="Kawai J."/>
            <person name="Narusaka M."/>
            <person name="Sakurai T."/>
            <person name="Satou M."/>
            <person name="Seki M."/>
            <person name="Shinozaki K."/>
            <person name="Ecker J.R."/>
        </authorList>
    </citation>
    <scope>NUCLEOTIDE SEQUENCE [LARGE SCALE MRNA]</scope>
    <source>
        <strain>cv. Columbia</strain>
    </source>
</reference>
<reference key="4">
    <citation type="submission" date="2006-07" db="EMBL/GenBank/DDBJ databases">
        <title>Large-scale analysis of RIKEN Arabidopsis full-length (RAFL) cDNAs.</title>
        <authorList>
            <person name="Totoki Y."/>
            <person name="Seki M."/>
            <person name="Ishida J."/>
            <person name="Nakajima M."/>
            <person name="Enju A."/>
            <person name="Kamiya A."/>
            <person name="Narusaka M."/>
            <person name="Shin-i T."/>
            <person name="Nakagawa M."/>
            <person name="Sakamoto N."/>
            <person name="Oishi K."/>
            <person name="Kohara Y."/>
            <person name="Kobayashi M."/>
            <person name="Toyoda A."/>
            <person name="Sakaki Y."/>
            <person name="Sakurai T."/>
            <person name="Iida K."/>
            <person name="Akiyama K."/>
            <person name="Satou M."/>
            <person name="Toyoda T."/>
            <person name="Konagaya A."/>
            <person name="Carninci P."/>
            <person name="Kawai J."/>
            <person name="Hayashizaki Y."/>
            <person name="Shinozaki K."/>
        </authorList>
    </citation>
    <scope>NUCLEOTIDE SEQUENCE [LARGE SCALE MRNA]</scope>
    <source>
        <strain>cv. Columbia</strain>
    </source>
</reference>
<accession>Q2V414</accession>
<accession>O22206</accession>
<sequence length="436" mass="49947">MKRRRKDLKQAAESEQEECQSIAQVVSLGDSDQIQPPPNKKEEEDICEYLLQNFDLDHVMEILMRFPLTSLTRFKCVSKQWSSLISSRYFCNLLYTTVTRQQPRLYMCLKDDGGHRVLLSISSPSRGNTSFVVVEQDLSIPGMGGFFLNVVRGLMCFSRRKKARIYNPSTKQLLTLPAIKSDIVAQQGQTKHHPRYYIGHDPVSDQYKLVCTVAISSLLPRLGNLKSEHWVFALEAGGSWKKVVPLENYRHHAPSTEGRSTSGSVVRYMAWPDNYNCVVVSFDIRSEQLTIIPVPREIHLDEVVPAVTMMADLIEYGGKIAIFYHTNLKDEGSADLWVLEDTGKSEWSKKTLVLQPCQRHLVEDIELIVKGTTQDGKVILAPVEMHSRFYILYYNLQSNDLRKVEIKGVPDSWFDKECYFDLNSMDKSESFIYLET</sequence>
<evidence type="ECO:0000305" key="1"/>
<proteinExistence type="evidence at transcript level"/>